<proteinExistence type="evidence at protein level"/>
<evidence type="ECO:0000250" key="1"/>
<evidence type="ECO:0000250" key="2">
    <source>
        <dbReference type="UniProtKB" id="O95997"/>
    </source>
</evidence>
<evidence type="ECO:0000256" key="3">
    <source>
        <dbReference type="SAM" id="MobiDB-lite"/>
    </source>
</evidence>
<evidence type="ECO:0000269" key="4">
    <source>
    </source>
</evidence>
<evidence type="ECO:0000269" key="5">
    <source>
    </source>
</evidence>
<evidence type="ECO:0000305" key="6"/>
<evidence type="ECO:0007744" key="7">
    <source>
    </source>
</evidence>
<accession>P97613</accession>
<reference key="1">
    <citation type="journal article" date="1997" name="Mol. Endocrinol.">
        <title>Isolation and characterization of a pituitary tumor-transforming gene (PTTG).</title>
        <authorList>
            <person name="Pei L."/>
            <person name="Melmed S."/>
        </authorList>
    </citation>
    <scope>NUCLEOTIDE SEQUENCE [MRNA]</scope>
    <scope>TISSUE SPECIFICITY</scope>
    <scope>DISEASE</scope>
    <source>
        <tissue>Pituitary tumor</tissue>
    </source>
</reference>
<reference key="2">
    <citation type="journal article" date="1998" name="J. Biol. Chem.">
        <title>Genomic organization and identification of an enhancer element containing binding sites for multiple proteins in rat pituitary tumor-transforming gene.</title>
        <authorList>
            <person name="Pei L."/>
        </authorList>
    </citation>
    <scope>NUCLEOTIDE SEQUENCE [GENOMIC DNA] OF 1-9</scope>
    <source>
        <strain>Sprague-Dawley</strain>
    </source>
</reference>
<reference key="3">
    <citation type="journal article" date="1999" name="J. Biol. Chem.">
        <title>Pituitary tumor-transforming gene protein associates with ribosomal protein S10 and a novel human homologue of DnaJ in testicular cells.</title>
        <authorList>
            <person name="Pei L."/>
        </authorList>
    </citation>
    <scope>TISSUE SPECIFICITY</scope>
    <scope>INTERACTION WITH RPS10 AND DNAJA1</scope>
</reference>
<reference key="4">
    <citation type="journal article" date="2012" name="Nat. Commun.">
        <title>Quantitative maps of protein phosphorylation sites across 14 different rat organs and tissues.</title>
        <authorList>
            <person name="Lundby A."/>
            <person name="Secher A."/>
            <person name="Lage K."/>
            <person name="Nordsborg N.B."/>
            <person name="Dmytriyev A."/>
            <person name="Lundby C."/>
            <person name="Olsen J.V."/>
        </authorList>
    </citation>
    <scope>PHOSPHORYLATION [LARGE SCALE ANALYSIS] AT SER-162</scope>
    <scope>IDENTIFICATION BY MASS SPECTROMETRY [LARGE SCALE ANALYSIS]</scope>
</reference>
<keyword id="KW-0007">Acetylation</keyword>
<keyword id="KW-0131">Cell cycle</keyword>
<keyword id="KW-0132">Cell division</keyword>
<keyword id="KW-0159">Chromosome partition</keyword>
<keyword id="KW-0963">Cytoplasm</keyword>
<keyword id="KW-0227">DNA damage</keyword>
<keyword id="KW-0234">DNA repair</keyword>
<keyword id="KW-0498">Mitosis</keyword>
<keyword id="KW-0539">Nucleus</keyword>
<keyword id="KW-0597">Phosphoprotein</keyword>
<keyword id="KW-0656">Proto-oncogene</keyword>
<keyword id="KW-1185">Reference proteome</keyword>
<keyword id="KW-0677">Repeat</keyword>
<keyword id="KW-0729">SH3-binding</keyword>
<keyword id="KW-0832">Ubl conjugation</keyword>
<organism>
    <name type="scientific">Rattus norvegicus</name>
    <name type="common">Rat</name>
    <dbReference type="NCBI Taxonomy" id="10116"/>
    <lineage>
        <taxon>Eukaryota</taxon>
        <taxon>Metazoa</taxon>
        <taxon>Chordata</taxon>
        <taxon>Craniata</taxon>
        <taxon>Vertebrata</taxon>
        <taxon>Euteleostomi</taxon>
        <taxon>Mammalia</taxon>
        <taxon>Eutheria</taxon>
        <taxon>Euarchontoglires</taxon>
        <taxon>Glires</taxon>
        <taxon>Rodentia</taxon>
        <taxon>Myomorpha</taxon>
        <taxon>Muroidea</taxon>
        <taxon>Muridae</taxon>
        <taxon>Murinae</taxon>
        <taxon>Rattus</taxon>
    </lineage>
</organism>
<sequence length="199" mass="21571">MATLIFVDKDNEEPGSRLASKDGLKLGSGVKALDGKLQVSTPRVGKVFGAPGLPKASRKALGTVNRVTEKPVKSSKPLQSKQPTLSVKKITEKSTKTQGSAPAPDDAYPEIEKFFPFDPLDFESFDLPEEHQISLLPLNGVPLMILNEERGLEKLLHLDPPSPLQKPFLPWESDPLPSPPSALSALDVELPPVCYDADI</sequence>
<protein>
    <recommendedName>
        <fullName>Securin</fullName>
    </recommendedName>
    <alternativeName>
        <fullName>Pituitary tumor-transforming gene 1 protein</fullName>
    </alternativeName>
</protein>
<feature type="initiator methionine" description="Removed" evidence="2">
    <location>
        <position position="1"/>
    </location>
</feature>
<feature type="chain" id="PRO_0000206364" description="Securin">
    <location>
        <begin position="2"/>
        <end position="199"/>
    </location>
</feature>
<feature type="region of interest" description="Disordered" evidence="3">
    <location>
        <begin position="1"/>
        <end position="23"/>
    </location>
</feature>
<feature type="region of interest" description="Disordered" evidence="3">
    <location>
        <begin position="58"/>
        <end position="108"/>
    </location>
</feature>
<feature type="short sequence motif" description="D-box">
    <location>
        <begin position="58"/>
        <end position="61"/>
    </location>
</feature>
<feature type="short sequence motif" description="TEK-box 1">
    <location>
        <begin position="68"/>
        <end position="70"/>
    </location>
</feature>
<feature type="short sequence motif" description="TEK-box 2">
    <location>
        <begin position="91"/>
        <end position="93"/>
    </location>
</feature>
<feature type="short sequence motif" description="SH3-binding">
    <location>
        <begin position="179"/>
        <end position="192"/>
    </location>
</feature>
<feature type="compositionally biased region" description="Basic and acidic residues" evidence="3">
    <location>
        <begin position="7"/>
        <end position="23"/>
    </location>
</feature>
<feature type="compositionally biased region" description="Polar residues" evidence="3">
    <location>
        <begin position="76"/>
        <end position="85"/>
    </location>
</feature>
<feature type="modified residue" description="N-acetylalanine" evidence="2">
    <location>
        <position position="2"/>
    </location>
</feature>
<feature type="modified residue" description="Phosphoserine" evidence="7">
    <location>
        <position position="162"/>
    </location>
</feature>
<dbReference type="EMBL" id="U73030">
    <property type="protein sequence ID" value="AAB47974.1"/>
    <property type="molecule type" value="mRNA"/>
</dbReference>
<dbReference type="EMBL" id="AF021802">
    <property type="protein sequence ID" value="AAC40036.1"/>
    <property type="molecule type" value="Genomic_DNA"/>
</dbReference>
<dbReference type="RefSeq" id="NP_071786.1">
    <property type="nucleotide sequence ID" value="NM_022391.3"/>
</dbReference>
<dbReference type="RefSeq" id="XP_006246204.1">
    <property type="nucleotide sequence ID" value="XM_006246142.3"/>
</dbReference>
<dbReference type="RefSeq" id="XP_006246205.1">
    <property type="nucleotide sequence ID" value="XM_006246143.5"/>
</dbReference>
<dbReference type="RefSeq" id="XP_006246206.1">
    <property type="nucleotide sequence ID" value="XM_006246144.3"/>
</dbReference>
<dbReference type="RefSeq" id="XP_006246207.1">
    <property type="nucleotide sequence ID" value="XM_006246145.3"/>
</dbReference>
<dbReference type="RefSeq" id="XP_063125882.1">
    <property type="nucleotide sequence ID" value="XM_063269812.1"/>
</dbReference>
<dbReference type="RefSeq" id="XP_063125883.1">
    <property type="nucleotide sequence ID" value="XM_063269813.1"/>
</dbReference>
<dbReference type="BioGRID" id="249000">
    <property type="interactions" value="3"/>
</dbReference>
<dbReference type="FunCoup" id="P97613">
    <property type="interactions" value="457"/>
</dbReference>
<dbReference type="STRING" id="10116.ENSRNOP00000005070"/>
<dbReference type="iPTMnet" id="P97613"/>
<dbReference type="PhosphoSitePlus" id="P97613"/>
<dbReference type="PaxDb" id="10116-ENSRNOP00000005070"/>
<dbReference type="Ensembl" id="ENSRNOT00000005070.6">
    <property type="protein sequence ID" value="ENSRNOP00000005070.2"/>
    <property type="gene ID" value="ENSRNOG00000003802.6"/>
</dbReference>
<dbReference type="GeneID" id="64193"/>
<dbReference type="KEGG" id="rno:64193"/>
<dbReference type="UCSC" id="RGD:68359">
    <property type="organism name" value="rat"/>
</dbReference>
<dbReference type="AGR" id="RGD:68359"/>
<dbReference type="CTD" id="9232"/>
<dbReference type="RGD" id="68359">
    <property type="gene designation" value="Pttg1"/>
</dbReference>
<dbReference type="eggNOG" id="ENOG502S2GG">
    <property type="taxonomic scope" value="Eukaryota"/>
</dbReference>
<dbReference type="GeneTree" id="ENSGT00390000009693"/>
<dbReference type="HOGENOM" id="CLU_1363209_0_0_1"/>
<dbReference type="InParanoid" id="P97613"/>
<dbReference type="OMA" id="PPVCYDF"/>
<dbReference type="OrthoDB" id="9905975at2759"/>
<dbReference type="PhylomeDB" id="P97613"/>
<dbReference type="TreeFam" id="TF330797"/>
<dbReference type="Reactome" id="R-RNO-174154">
    <property type="pathway name" value="APC/C:Cdc20 mediated degradation of Securin"/>
</dbReference>
<dbReference type="Reactome" id="R-RNO-174178">
    <property type="pathway name" value="APC/C:Cdh1 mediated degradation of Cdc20 and other APC/C:Cdh1 targeted proteins in late mitosis/early G1"/>
</dbReference>
<dbReference type="Reactome" id="R-RNO-2467813">
    <property type="pathway name" value="Separation of Sister Chromatids"/>
</dbReference>
<dbReference type="PRO" id="PR:P97613"/>
<dbReference type="Proteomes" id="UP000002494">
    <property type="component" value="Chromosome 10"/>
</dbReference>
<dbReference type="Bgee" id="ENSRNOG00000003802">
    <property type="expression patterns" value="Expressed in testis and 20 other cell types or tissues"/>
</dbReference>
<dbReference type="ExpressionAtlas" id="P97613">
    <property type="expression patterns" value="baseline and differential"/>
</dbReference>
<dbReference type="GO" id="GO:0005930">
    <property type="term" value="C:axoneme"/>
    <property type="evidence" value="ECO:0000266"/>
    <property type="project" value="RGD"/>
</dbReference>
<dbReference type="GO" id="GO:0005929">
    <property type="term" value="C:cilium"/>
    <property type="evidence" value="ECO:0000266"/>
    <property type="project" value="RGD"/>
</dbReference>
<dbReference type="GO" id="GO:0005737">
    <property type="term" value="C:cytoplasm"/>
    <property type="evidence" value="ECO:0000266"/>
    <property type="project" value="RGD"/>
</dbReference>
<dbReference type="GO" id="GO:0005829">
    <property type="term" value="C:cytosol"/>
    <property type="evidence" value="ECO:0000266"/>
    <property type="project" value="RGD"/>
</dbReference>
<dbReference type="GO" id="GO:0005634">
    <property type="term" value="C:nucleus"/>
    <property type="evidence" value="ECO:0000266"/>
    <property type="project" value="RGD"/>
</dbReference>
<dbReference type="GO" id="GO:0004869">
    <property type="term" value="F:cysteine-type endopeptidase inhibitor activity"/>
    <property type="evidence" value="ECO:0000266"/>
    <property type="project" value="RGD"/>
</dbReference>
<dbReference type="GO" id="GO:0031072">
    <property type="term" value="F:heat shock protein binding"/>
    <property type="evidence" value="ECO:0000353"/>
    <property type="project" value="RGD"/>
</dbReference>
<dbReference type="GO" id="GO:0140677">
    <property type="term" value="F:molecular function activator activity"/>
    <property type="evidence" value="ECO:0000266"/>
    <property type="project" value="RGD"/>
</dbReference>
<dbReference type="GO" id="GO:0043022">
    <property type="term" value="F:ribosome binding"/>
    <property type="evidence" value="ECO:0000353"/>
    <property type="project" value="RGD"/>
</dbReference>
<dbReference type="GO" id="GO:0017124">
    <property type="term" value="F:SH3 domain binding"/>
    <property type="evidence" value="ECO:0007669"/>
    <property type="project" value="UniProtKB-KW"/>
</dbReference>
<dbReference type="GO" id="GO:0051301">
    <property type="term" value="P:cell division"/>
    <property type="evidence" value="ECO:0007669"/>
    <property type="project" value="UniProtKB-KW"/>
</dbReference>
<dbReference type="GO" id="GO:0007059">
    <property type="term" value="P:chromosome segregation"/>
    <property type="evidence" value="ECO:0000266"/>
    <property type="project" value="RGD"/>
</dbReference>
<dbReference type="GO" id="GO:0006281">
    <property type="term" value="P:DNA repair"/>
    <property type="evidence" value="ECO:0007669"/>
    <property type="project" value="UniProtKB-KW"/>
</dbReference>
<dbReference type="GO" id="GO:0045143">
    <property type="term" value="P:homologous chromosome segregation"/>
    <property type="evidence" value="ECO:0000266"/>
    <property type="project" value="RGD"/>
</dbReference>
<dbReference type="GO" id="GO:0007064">
    <property type="term" value="P:mitotic sister chromatid cohesion"/>
    <property type="evidence" value="ECO:0000266"/>
    <property type="project" value="RGD"/>
</dbReference>
<dbReference type="GO" id="GO:0008285">
    <property type="term" value="P:negative regulation of cell population proliferation"/>
    <property type="evidence" value="ECO:0000315"/>
    <property type="project" value="RGD"/>
</dbReference>
<dbReference type="GO" id="GO:0001558">
    <property type="term" value="P:regulation of cell growth"/>
    <property type="evidence" value="ECO:0000315"/>
    <property type="project" value="RGD"/>
</dbReference>
<dbReference type="GO" id="GO:0007224">
    <property type="term" value="P:smoothened signaling pathway"/>
    <property type="evidence" value="ECO:0000266"/>
    <property type="project" value="RGD"/>
</dbReference>
<dbReference type="InterPro" id="IPR006940">
    <property type="entry name" value="Securin_separation_inhibitor"/>
</dbReference>
<dbReference type="PANTHER" id="PTHR10418:SF2">
    <property type="entry name" value="SECURIN"/>
    <property type="match status" value="1"/>
</dbReference>
<dbReference type="PANTHER" id="PTHR10418">
    <property type="entry name" value="SECURIN-3"/>
    <property type="match status" value="1"/>
</dbReference>
<dbReference type="Pfam" id="PF04856">
    <property type="entry name" value="Securin"/>
    <property type="match status" value="1"/>
</dbReference>
<name>PTTG1_RAT</name>
<gene>
    <name type="primary">Pttg1</name>
    <name type="synonym">Pttg</name>
</gene>
<comment type="function">
    <text evidence="1">Regulatory protein, which plays a central role in chromosome stability, in the p53/TP53 pathway, and DNA repair. Probably acts by blocking the action of key proteins. During the mitosis, it blocks Separase/ESPL1 function, preventing the proteolysis of the cohesin complex and the subsequent segregation of the chromosomes. At the onset of anaphase, it is ubiquitinated, conducting to its destruction and to the liberation of ESPL1. Its function is however not limited to a blocking activity, since it is required to activate ESPL1. Negatively regulates the transcriptional activity and related apoptosis activity of p53/TP53. The negative regulation of p53/TP53 may explain the strong transforming capability of the protein when it is overexpressed. May also play a role in DNA repair via its interaction with Ku, possibly by connecting DNA damage-response pathways with sister chromatid separation (By similarity).</text>
</comment>
<comment type="subunit">
    <text evidence="1 5">Interacts with the caspase-like ESPL1, and prevents its protease activity by covering its active site. Interacts with p53/TP53 and blocks its activity probably by blocking its binding to DNA. Interacts with the Ku 70 kDa subunit of ds-DNA kinase. Interacts with PTTG1IP (By similarity). Interacts with RPS10 and DNAJA1.</text>
</comment>
<comment type="subcellular location">
    <subcellularLocation>
        <location evidence="1">Cytoplasm</location>
    </subcellularLocation>
    <subcellularLocation>
        <location evidence="1">Nucleus</location>
    </subcellularLocation>
</comment>
<comment type="tissue specificity">
    <text evidence="4 5">Expressed at low level in most tissues, except in adult testis, where it is highly expressed. Expressed in both spermatocytes and spermatids.</text>
</comment>
<comment type="domain">
    <text evidence="1">The N-terminal destruction box (D-box) acts as a recognition signal for degradation via the ubiquitin-proteasome pathway.</text>
</comment>
<comment type="domain">
    <text evidence="1">The TEK-boxes are required for 'Lys-11'-linked ubiquitination and facilitate the transfer of the first ubiquitin and ubiquitin chain nucleation. TEK-boxes may direct a catalytically competent orientation of the UBE2C/UBCH10-ubiquitin thioester with the acceptor lysine residue (By similarity).</text>
</comment>
<comment type="PTM">
    <text evidence="1">Phosphorylated at Ser-162 by CDK1 during mitosis.</text>
</comment>
<comment type="PTM">
    <text evidence="1">Phosphorylated in vitro by ds-DNA kinase.</text>
</comment>
<comment type="PTM">
    <text evidence="1">Ubiquitinated through 'Lys-11' linkage of ubiquitin moieties by the anaphase promoting complex (APC) at the onset of anaphase, conducting to its degradation. 'Lys-11'-linked ubiquitination is mediated by the E2 ligase UBE2C/UBCH10 (By similarity).</text>
</comment>
<comment type="disease">
    <text evidence="4">Has strong transforming capabilities on a variety of cell lines including NIH 3T3 fibroblasts and on athymic nude mice. Overexpressed in animals suffering from pituitary adenomas. The transforming capability may be due to its interaction and regulation of p53/TP53 pathway.</text>
</comment>
<comment type="similarity">
    <text evidence="6">Belongs to the securin family.</text>
</comment>